<reference key="1">
    <citation type="journal article" date="2004" name="Nat. Genet.">
        <title>Complete sequencing and characterization of 21,243 full-length human cDNAs.</title>
        <authorList>
            <person name="Ota T."/>
            <person name="Suzuki Y."/>
            <person name="Nishikawa T."/>
            <person name="Otsuki T."/>
            <person name="Sugiyama T."/>
            <person name="Irie R."/>
            <person name="Wakamatsu A."/>
            <person name="Hayashi K."/>
            <person name="Sato H."/>
            <person name="Nagai K."/>
            <person name="Kimura K."/>
            <person name="Makita H."/>
            <person name="Sekine M."/>
            <person name="Obayashi M."/>
            <person name="Nishi T."/>
            <person name="Shibahara T."/>
            <person name="Tanaka T."/>
            <person name="Ishii S."/>
            <person name="Yamamoto J."/>
            <person name="Saito K."/>
            <person name="Kawai Y."/>
            <person name="Isono Y."/>
            <person name="Nakamura Y."/>
            <person name="Nagahari K."/>
            <person name="Murakami K."/>
            <person name="Yasuda T."/>
            <person name="Iwayanagi T."/>
            <person name="Wagatsuma M."/>
            <person name="Shiratori A."/>
            <person name="Sudo H."/>
            <person name="Hosoiri T."/>
            <person name="Kaku Y."/>
            <person name="Kodaira H."/>
            <person name="Kondo H."/>
            <person name="Sugawara M."/>
            <person name="Takahashi M."/>
            <person name="Kanda K."/>
            <person name="Yokoi T."/>
            <person name="Furuya T."/>
            <person name="Kikkawa E."/>
            <person name="Omura Y."/>
            <person name="Abe K."/>
            <person name="Kamihara K."/>
            <person name="Katsuta N."/>
            <person name="Sato K."/>
            <person name="Tanikawa M."/>
            <person name="Yamazaki M."/>
            <person name="Ninomiya K."/>
            <person name="Ishibashi T."/>
            <person name="Yamashita H."/>
            <person name="Murakawa K."/>
            <person name="Fujimori K."/>
            <person name="Tanai H."/>
            <person name="Kimata M."/>
            <person name="Watanabe M."/>
            <person name="Hiraoka S."/>
            <person name="Chiba Y."/>
            <person name="Ishida S."/>
            <person name="Ono Y."/>
            <person name="Takiguchi S."/>
            <person name="Watanabe S."/>
            <person name="Yosida M."/>
            <person name="Hotuta T."/>
            <person name="Kusano J."/>
            <person name="Kanehori K."/>
            <person name="Takahashi-Fujii A."/>
            <person name="Hara H."/>
            <person name="Tanase T.-O."/>
            <person name="Nomura Y."/>
            <person name="Togiya S."/>
            <person name="Komai F."/>
            <person name="Hara R."/>
            <person name="Takeuchi K."/>
            <person name="Arita M."/>
            <person name="Imose N."/>
            <person name="Musashino K."/>
            <person name="Yuuki H."/>
            <person name="Oshima A."/>
            <person name="Sasaki N."/>
            <person name="Aotsuka S."/>
            <person name="Yoshikawa Y."/>
            <person name="Matsunawa H."/>
            <person name="Ichihara T."/>
            <person name="Shiohata N."/>
            <person name="Sano S."/>
            <person name="Moriya S."/>
            <person name="Momiyama H."/>
            <person name="Satoh N."/>
            <person name="Takami S."/>
            <person name="Terashima Y."/>
            <person name="Suzuki O."/>
            <person name="Nakagawa S."/>
            <person name="Senoh A."/>
            <person name="Mizoguchi H."/>
            <person name="Goto Y."/>
            <person name="Shimizu F."/>
            <person name="Wakebe H."/>
            <person name="Hishigaki H."/>
            <person name="Watanabe T."/>
            <person name="Sugiyama A."/>
            <person name="Takemoto M."/>
            <person name="Kawakami B."/>
            <person name="Yamazaki M."/>
            <person name="Watanabe K."/>
            <person name="Kumagai A."/>
            <person name="Itakura S."/>
            <person name="Fukuzumi Y."/>
            <person name="Fujimori Y."/>
            <person name="Komiyama M."/>
            <person name="Tashiro H."/>
            <person name="Tanigami A."/>
            <person name="Fujiwara T."/>
            <person name="Ono T."/>
            <person name="Yamada K."/>
            <person name="Fujii Y."/>
            <person name="Ozaki K."/>
            <person name="Hirao M."/>
            <person name="Ohmori Y."/>
            <person name="Kawabata A."/>
            <person name="Hikiji T."/>
            <person name="Kobatake N."/>
            <person name="Inagaki H."/>
            <person name="Ikema Y."/>
            <person name="Okamoto S."/>
            <person name="Okitani R."/>
            <person name="Kawakami T."/>
            <person name="Noguchi S."/>
            <person name="Itoh T."/>
            <person name="Shigeta K."/>
            <person name="Senba T."/>
            <person name="Matsumura K."/>
            <person name="Nakajima Y."/>
            <person name="Mizuno T."/>
            <person name="Morinaga M."/>
            <person name="Sasaki M."/>
            <person name="Togashi T."/>
            <person name="Oyama M."/>
            <person name="Hata H."/>
            <person name="Watanabe M."/>
            <person name="Komatsu T."/>
            <person name="Mizushima-Sugano J."/>
            <person name="Satoh T."/>
            <person name="Shirai Y."/>
            <person name="Takahashi Y."/>
            <person name="Nakagawa K."/>
            <person name="Okumura K."/>
            <person name="Nagase T."/>
            <person name="Nomura N."/>
            <person name="Kikuchi H."/>
            <person name="Masuho Y."/>
            <person name="Yamashita R."/>
            <person name="Nakai K."/>
            <person name="Yada T."/>
            <person name="Nakamura Y."/>
            <person name="Ohara O."/>
            <person name="Isogai T."/>
            <person name="Sugano S."/>
        </authorList>
    </citation>
    <scope>NUCLEOTIDE SEQUENCE [LARGE SCALE MRNA] (ISOFORM 1)</scope>
    <source>
        <tissue>Tongue</tissue>
    </source>
</reference>
<reference key="2">
    <citation type="journal article" date="2004" name="Genome Res.">
        <title>The status, quality, and expansion of the NIH full-length cDNA project: the Mammalian Gene Collection (MGC).</title>
        <authorList>
            <consortium name="The MGC Project Team"/>
        </authorList>
    </citation>
    <scope>NUCLEOTIDE SEQUENCE [LARGE SCALE MRNA] (ISOFORM 2)</scope>
    <source>
        <tissue>Placenta</tissue>
    </source>
</reference>
<reference key="3">
    <citation type="journal article" date="2015" name="Proteomics">
        <title>N-terminome analysis of the human mitochondrial proteome.</title>
        <authorList>
            <person name="Vaca Jacome A.S."/>
            <person name="Rabilloud T."/>
            <person name="Schaeffer-Reiss C."/>
            <person name="Rompais M."/>
            <person name="Ayoub D."/>
            <person name="Lane L."/>
            <person name="Bairoch A."/>
            <person name="Van Dorsselaer A."/>
            <person name="Carapito C."/>
        </authorList>
    </citation>
    <scope>IDENTIFICATION BY MASS SPECTROMETRY [LARGE SCALE ANALYSIS]</scope>
</reference>
<proteinExistence type="evidence at protein level"/>
<comment type="function">
    <text evidence="2">Acyl-CoA diphosphatase that mediates the hydrolysis of a wide range of CoA and CoA esters yielding 3',5'-ADP and the corresponding 4'-phosphopantetheine derivative as products (By similarity). Hydrolyzes short- and medium-chain acyl-CoAs, exhibiting the highest activity toward free CoA, hexanoyl-CoA, and octanoyl-CoA and the lowest activity against acetyl-CoA (By similarity). Exhibits decapping activity towards dpCoA-capped RNAs in vitro (By similarity).</text>
</comment>
<comment type="catalytic activity">
    <reaction evidence="2">
        <text>an acyl-CoA + H2O = an acyl-4'-phosphopantetheine + adenosine 3',5'-bisphosphate + 2 H(+)</text>
        <dbReference type="Rhea" id="RHEA:50044"/>
        <dbReference type="ChEBI" id="CHEBI:15377"/>
        <dbReference type="ChEBI" id="CHEBI:15378"/>
        <dbReference type="ChEBI" id="CHEBI:58342"/>
        <dbReference type="ChEBI" id="CHEBI:58343"/>
        <dbReference type="ChEBI" id="CHEBI:132023"/>
    </reaction>
    <physiologicalReaction direction="left-to-right" evidence="2">
        <dbReference type="Rhea" id="RHEA:50045"/>
    </physiologicalReaction>
</comment>
<comment type="catalytic activity">
    <reaction evidence="2">
        <text>CoA + H2O = (R)-4'-phosphopantetheine + adenosine 3',5'-bisphosphate + 2 H(+)</text>
        <dbReference type="Rhea" id="RHEA:64988"/>
        <dbReference type="ChEBI" id="CHEBI:15377"/>
        <dbReference type="ChEBI" id="CHEBI:15378"/>
        <dbReference type="ChEBI" id="CHEBI:57287"/>
        <dbReference type="ChEBI" id="CHEBI:58343"/>
        <dbReference type="ChEBI" id="CHEBI:61723"/>
        <dbReference type="EC" id="3.6.1.77"/>
    </reaction>
    <physiologicalReaction direction="left-to-right" evidence="2">
        <dbReference type="Rhea" id="RHEA:64989"/>
    </physiologicalReaction>
</comment>
<comment type="catalytic activity">
    <reaction evidence="2">
        <text>acetyl-CoA + H2O = S-acetyl-4'-phosphopantetheine + adenosine 3',5'-bisphosphate + 2 H(+)</text>
        <dbReference type="Rhea" id="RHEA:64992"/>
        <dbReference type="ChEBI" id="CHEBI:15377"/>
        <dbReference type="ChEBI" id="CHEBI:15378"/>
        <dbReference type="ChEBI" id="CHEBI:57288"/>
        <dbReference type="ChEBI" id="CHEBI:58343"/>
        <dbReference type="ChEBI" id="CHEBI:156266"/>
    </reaction>
    <physiologicalReaction direction="left-to-right" evidence="2">
        <dbReference type="Rhea" id="RHEA:64993"/>
    </physiologicalReaction>
</comment>
<comment type="catalytic activity">
    <reaction evidence="2">
        <text>butanoyl-CoA + H2O = S-butanoyl-4'-phosphopantetheine + adenosine 3',5'-bisphosphate + 2 H(+)</text>
        <dbReference type="Rhea" id="RHEA:49976"/>
        <dbReference type="ChEBI" id="CHEBI:15377"/>
        <dbReference type="ChEBI" id="CHEBI:15378"/>
        <dbReference type="ChEBI" id="CHEBI:57371"/>
        <dbReference type="ChEBI" id="CHEBI:58343"/>
        <dbReference type="ChEBI" id="CHEBI:132011"/>
    </reaction>
    <physiologicalReaction direction="left-to-right" evidence="2">
        <dbReference type="Rhea" id="RHEA:49977"/>
    </physiologicalReaction>
</comment>
<comment type="catalytic activity">
    <reaction evidence="2">
        <text>hexanoyl-CoA + H2O = hexanoyl-4'-phosphopantetheine + adenosine 3',5'-bisphosphate + 2 H(+)</text>
        <dbReference type="Rhea" id="RHEA:49980"/>
        <dbReference type="ChEBI" id="CHEBI:15377"/>
        <dbReference type="ChEBI" id="CHEBI:15378"/>
        <dbReference type="ChEBI" id="CHEBI:58343"/>
        <dbReference type="ChEBI" id="CHEBI:62620"/>
        <dbReference type="ChEBI" id="CHEBI:132012"/>
    </reaction>
    <physiologicalReaction direction="left-to-right" evidence="2">
        <dbReference type="Rhea" id="RHEA:49981"/>
    </physiologicalReaction>
</comment>
<comment type="catalytic activity">
    <reaction evidence="2">
        <text>octanoyl-CoA + H2O = S-octanoyl-4'-phosphopantetheine + adenosine 3',5'-bisphosphate + 2 H(+)</text>
        <dbReference type="Rhea" id="RHEA:50016"/>
        <dbReference type="ChEBI" id="CHEBI:15377"/>
        <dbReference type="ChEBI" id="CHEBI:15378"/>
        <dbReference type="ChEBI" id="CHEBI:57386"/>
        <dbReference type="ChEBI" id="CHEBI:58343"/>
        <dbReference type="ChEBI" id="CHEBI:132013"/>
    </reaction>
    <physiologicalReaction direction="left-to-right" evidence="2">
        <dbReference type="Rhea" id="RHEA:50017"/>
    </physiologicalReaction>
</comment>
<comment type="catalytic activity">
    <reaction evidence="2">
        <text>propanoyl-CoA + H2O = propanoyl-4'-phosphopantetheine + adenosine 3',5'-bisphosphate + 2 H(+)</text>
        <dbReference type="Rhea" id="RHEA:67464"/>
        <dbReference type="ChEBI" id="CHEBI:15377"/>
        <dbReference type="ChEBI" id="CHEBI:15378"/>
        <dbReference type="ChEBI" id="CHEBI:57392"/>
        <dbReference type="ChEBI" id="CHEBI:58343"/>
        <dbReference type="ChEBI" id="CHEBI:172362"/>
    </reaction>
    <physiologicalReaction direction="left-to-right" evidence="2">
        <dbReference type="Rhea" id="RHEA:67465"/>
    </physiologicalReaction>
</comment>
<comment type="catalytic activity">
    <reaction evidence="2">
        <text>malonyl-CoA + H2O = malonyl-4'-phosphopantetheine + adenosine 3',5'-bisphosphate + 2 H(+)</text>
        <dbReference type="Rhea" id="RHEA:67468"/>
        <dbReference type="ChEBI" id="CHEBI:15377"/>
        <dbReference type="ChEBI" id="CHEBI:15378"/>
        <dbReference type="ChEBI" id="CHEBI:57384"/>
        <dbReference type="ChEBI" id="CHEBI:58343"/>
        <dbReference type="ChEBI" id="CHEBI:172363"/>
    </reaction>
    <physiologicalReaction direction="left-to-right" evidence="2">
        <dbReference type="Rhea" id="RHEA:67469"/>
    </physiologicalReaction>
</comment>
<comment type="catalytic activity">
    <reaction evidence="2">
        <text>succinyl-CoA + H2O = succinyl-4'-phosphopantetheine + adenosine 3',5'-bisphosphate + 2 H(+)</text>
        <dbReference type="Rhea" id="RHEA:67472"/>
        <dbReference type="ChEBI" id="CHEBI:15377"/>
        <dbReference type="ChEBI" id="CHEBI:15378"/>
        <dbReference type="ChEBI" id="CHEBI:57292"/>
        <dbReference type="ChEBI" id="CHEBI:58343"/>
        <dbReference type="ChEBI" id="CHEBI:172364"/>
    </reaction>
    <physiologicalReaction direction="left-to-right" evidence="2">
        <dbReference type="Rhea" id="RHEA:67473"/>
    </physiologicalReaction>
</comment>
<comment type="catalytic activity">
    <reaction evidence="2">
        <text>a 5'-end CoA-ribonucleoside in mRNA + H2O = a 5'-end phospho-adenosine-phospho-ribonucleoside in mRNA + (R)-4'-phosphopantetheine + 2 H(+)</text>
        <dbReference type="Rhea" id="RHEA:67592"/>
        <dbReference type="Rhea" id="RHEA-COMP:15719"/>
        <dbReference type="Rhea" id="RHEA-COMP:17276"/>
        <dbReference type="ChEBI" id="CHEBI:15377"/>
        <dbReference type="ChEBI" id="CHEBI:15378"/>
        <dbReference type="ChEBI" id="CHEBI:61723"/>
        <dbReference type="ChEBI" id="CHEBI:144051"/>
        <dbReference type="ChEBI" id="CHEBI:172371"/>
    </reaction>
    <physiologicalReaction direction="left-to-right" evidence="2">
        <dbReference type="Rhea" id="RHEA:67593"/>
    </physiologicalReaction>
</comment>
<comment type="cofactor">
    <cofactor evidence="2">
        <name>Mg(2+)</name>
        <dbReference type="ChEBI" id="CHEBI:18420"/>
    </cofactor>
    <cofactor evidence="2">
        <name>Mn(2+)</name>
        <dbReference type="ChEBI" id="CHEBI:29035"/>
    </cofactor>
</comment>
<comment type="subunit">
    <text evidence="2">Monomer.</text>
</comment>
<comment type="subcellular location">
    <subcellularLocation>
        <location evidence="2">Mitochondrion</location>
    </subcellularLocation>
</comment>
<comment type="alternative products">
    <event type="alternative splicing"/>
    <isoform>
        <id>Q8WV74-1</id>
        <name>1</name>
        <sequence type="displayed"/>
    </isoform>
    <isoform>
        <id>Q8WV74-2</id>
        <name>2</name>
        <sequence type="described" ref="VSP_014282 VSP_014283"/>
    </isoform>
</comment>
<comment type="similarity">
    <text evidence="5">Belongs to the Nudix hydrolase family.</text>
</comment>
<protein>
    <recommendedName>
        <fullName>Mitochondrial coenzyme A diphosphatase NUDT8</fullName>
        <ecNumber>3.6.1.-</ecNumber>
        <ecNumber evidence="2">3.6.1.77</ecNumber>
    </recommendedName>
    <alternativeName>
        <fullName>Nucleoside diphosphate-linked moiety X motif 8</fullName>
        <shortName>Nudix motif 8</shortName>
    </alternativeName>
</protein>
<organism>
    <name type="scientific">Homo sapiens</name>
    <name type="common">Human</name>
    <dbReference type="NCBI Taxonomy" id="9606"/>
    <lineage>
        <taxon>Eukaryota</taxon>
        <taxon>Metazoa</taxon>
        <taxon>Chordata</taxon>
        <taxon>Craniata</taxon>
        <taxon>Vertebrata</taxon>
        <taxon>Euteleostomi</taxon>
        <taxon>Mammalia</taxon>
        <taxon>Eutheria</taxon>
        <taxon>Euarchontoglires</taxon>
        <taxon>Primates</taxon>
        <taxon>Haplorrhini</taxon>
        <taxon>Catarrhini</taxon>
        <taxon>Hominidae</taxon>
        <taxon>Homo</taxon>
    </lineage>
</organism>
<gene>
    <name type="primary">NUDT8</name>
</gene>
<feature type="chain" id="PRO_0000019948" description="Mitochondrial coenzyme A diphosphatase NUDT8">
    <location>
        <begin position="1"/>
        <end position="236"/>
    </location>
</feature>
<feature type="domain" description="Nudix hydrolase" evidence="3">
    <location>
        <begin position="25"/>
        <end position="172"/>
    </location>
</feature>
<feature type="short sequence motif" description="Nudix box">
    <location>
        <begin position="70"/>
        <end position="91"/>
    </location>
</feature>
<feature type="binding site" evidence="1">
    <location>
        <position position="85"/>
    </location>
    <ligand>
        <name>Mg(2+)</name>
        <dbReference type="ChEBI" id="CHEBI:18420"/>
    </ligand>
</feature>
<feature type="binding site" evidence="1">
    <location>
        <position position="89"/>
    </location>
    <ligand>
        <name>Mg(2+)</name>
        <dbReference type="ChEBI" id="CHEBI:18420"/>
    </ligand>
</feature>
<feature type="modified residue" description="N6-succinyllysine" evidence="2">
    <location>
        <position position="70"/>
    </location>
</feature>
<feature type="splice variant" id="VSP_014282" description="In isoform 2." evidence="4">
    <original>DEVF</original>
    <variation>SWGI</variation>
    <location>
        <begin position="137"/>
        <end position="140"/>
    </location>
</feature>
<feature type="splice variant" id="VSP_014283" description="In isoform 2." evidence="4">
    <location>
        <begin position="141"/>
        <end position="236"/>
    </location>
</feature>
<dbReference type="EC" id="3.6.1.-"/>
<dbReference type="EC" id="3.6.1.77" evidence="2"/>
<dbReference type="EMBL" id="AK123561">
    <property type="protein sequence ID" value="BAC85646.1"/>
    <property type="molecule type" value="mRNA"/>
</dbReference>
<dbReference type="EMBL" id="BC018644">
    <property type="protein sequence ID" value="AAH18644.1"/>
    <property type="molecule type" value="mRNA"/>
</dbReference>
<dbReference type="CCDS" id="CCDS58151.1">
    <molecule id="Q8WV74-1"/>
</dbReference>
<dbReference type="CCDS" id="CCDS8174.1">
    <molecule id="Q8WV74-2"/>
</dbReference>
<dbReference type="RefSeq" id="NP_001230679.1">
    <molecule id="Q8WV74-1"/>
    <property type="nucleotide sequence ID" value="NM_001243750.2"/>
</dbReference>
<dbReference type="RefSeq" id="NP_862826.1">
    <molecule id="Q8WV74-2"/>
    <property type="nucleotide sequence ID" value="NM_181843.3"/>
</dbReference>
<dbReference type="SMR" id="Q8WV74"/>
<dbReference type="BioGRID" id="129040">
    <property type="interactions" value="25"/>
</dbReference>
<dbReference type="FunCoup" id="Q8WV74">
    <property type="interactions" value="530"/>
</dbReference>
<dbReference type="IntAct" id="Q8WV74">
    <property type="interactions" value="21"/>
</dbReference>
<dbReference type="STRING" id="9606.ENSP00000365883"/>
<dbReference type="GlyGen" id="Q8WV74">
    <property type="glycosylation" value="1 site"/>
</dbReference>
<dbReference type="iPTMnet" id="Q8WV74"/>
<dbReference type="PhosphoSitePlus" id="Q8WV74"/>
<dbReference type="SwissPalm" id="Q8WV74"/>
<dbReference type="BioMuta" id="NUDT8"/>
<dbReference type="DMDM" id="68565920"/>
<dbReference type="jPOST" id="Q8WV74"/>
<dbReference type="MassIVE" id="Q8WV74"/>
<dbReference type="PaxDb" id="9606-ENSP00000365883"/>
<dbReference type="PeptideAtlas" id="Q8WV74"/>
<dbReference type="ProteomicsDB" id="74757">
    <molecule id="Q8WV74-1"/>
</dbReference>
<dbReference type="ProteomicsDB" id="74758">
    <molecule id="Q8WV74-2"/>
</dbReference>
<dbReference type="Pumba" id="Q8WV74"/>
<dbReference type="Antibodypedia" id="30486">
    <property type="antibodies" value="120 antibodies from 22 providers"/>
</dbReference>
<dbReference type="DNASU" id="254552"/>
<dbReference type="Ensembl" id="ENST00000301490.8">
    <molecule id="Q8WV74-2"/>
    <property type="protein sequence ID" value="ENSP00000301490.4"/>
    <property type="gene ID" value="ENSG00000167799.10"/>
</dbReference>
<dbReference type="Ensembl" id="ENST00000376693.3">
    <molecule id="Q8WV74-1"/>
    <property type="protein sequence ID" value="ENSP00000365883.2"/>
    <property type="gene ID" value="ENSG00000167799.10"/>
</dbReference>
<dbReference type="GeneID" id="254552"/>
<dbReference type="KEGG" id="hsa:254552"/>
<dbReference type="MANE-Select" id="ENST00000376693.3">
    <property type="protein sequence ID" value="ENSP00000365883.2"/>
    <property type="RefSeq nucleotide sequence ID" value="NM_001243750.2"/>
    <property type="RefSeq protein sequence ID" value="NP_001230679.1"/>
</dbReference>
<dbReference type="UCSC" id="uc001omn.4">
    <molecule id="Q8WV74-1"/>
    <property type="organism name" value="human"/>
</dbReference>
<dbReference type="AGR" id="HGNC:8055"/>
<dbReference type="CTD" id="254552"/>
<dbReference type="GeneCards" id="NUDT8"/>
<dbReference type="HGNC" id="HGNC:8055">
    <property type="gene designation" value="NUDT8"/>
</dbReference>
<dbReference type="HPA" id="ENSG00000167799">
    <property type="expression patterns" value="Tissue enhanced (heart)"/>
</dbReference>
<dbReference type="neXtProt" id="NX_Q8WV74"/>
<dbReference type="OpenTargets" id="ENSG00000167799"/>
<dbReference type="PharmGKB" id="PA31841"/>
<dbReference type="VEuPathDB" id="HostDB:ENSG00000167799"/>
<dbReference type="eggNOG" id="KOG3069">
    <property type="taxonomic scope" value="Eukaryota"/>
</dbReference>
<dbReference type="GeneTree" id="ENSGT00940000163889"/>
<dbReference type="HOGENOM" id="CLU_1834486_0_0_1"/>
<dbReference type="InParanoid" id="Q8WV74"/>
<dbReference type="OMA" id="YYIWGAT"/>
<dbReference type="OrthoDB" id="10262892at2759"/>
<dbReference type="PAN-GO" id="Q8WV74">
    <property type="GO annotations" value="0 GO annotations based on evolutionary models"/>
</dbReference>
<dbReference type="PhylomeDB" id="Q8WV74"/>
<dbReference type="TreeFam" id="TF106350"/>
<dbReference type="PathwayCommons" id="Q8WV74"/>
<dbReference type="Reactome" id="R-HSA-199220">
    <property type="pathway name" value="Vitamin B5 (pantothenate) metabolism"/>
</dbReference>
<dbReference type="SignaLink" id="Q8WV74"/>
<dbReference type="BioGRID-ORCS" id="254552">
    <property type="hits" value="19 hits in 1156 CRISPR screens"/>
</dbReference>
<dbReference type="ChiTaRS" id="NUDT8">
    <property type="organism name" value="human"/>
</dbReference>
<dbReference type="GenomeRNAi" id="254552"/>
<dbReference type="Pharos" id="Q8WV74">
    <property type="development level" value="Tdark"/>
</dbReference>
<dbReference type="PRO" id="PR:Q8WV74"/>
<dbReference type="Proteomes" id="UP000005640">
    <property type="component" value="Chromosome 11"/>
</dbReference>
<dbReference type="RNAct" id="Q8WV74">
    <property type="molecule type" value="protein"/>
</dbReference>
<dbReference type="Bgee" id="ENSG00000167799">
    <property type="expression patterns" value="Expressed in apex of heart and 96 other cell types or tissues"/>
</dbReference>
<dbReference type="GO" id="GO:0005739">
    <property type="term" value="C:mitochondrion"/>
    <property type="evidence" value="ECO:0006056"/>
    <property type="project" value="FlyBase"/>
</dbReference>
<dbReference type="GO" id="GO:0010945">
    <property type="term" value="F:coenzyme A diphosphatase activity"/>
    <property type="evidence" value="ECO:0007669"/>
    <property type="project" value="InterPro"/>
</dbReference>
<dbReference type="GO" id="GO:0000287">
    <property type="term" value="F:magnesium ion binding"/>
    <property type="evidence" value="ECO:0000250"/>
    <property type="project" value="UniProtKB"/>
</dbReference>
<dbReference type="GO" id="GO:0030145">
    <property type="term" value="F:manganese ion binding"/>
    <property type="evidence" value="ECO:0000250"/>
    <property type="project" value="UniProtKB"/>
</dbReference>
<dbReference type="GO" id="GO:0046356">
    <property type="term" value="P:acetyl-CoA catabolic process"/>
    <property type="evidence" value="ECO:0000250"/>
    <property type="project" value="UniProtKB"/>
</dbReference>
<dbReference type="GO" id="GO:0044580">
    <property type="term" value="P:butyryl-CoA catabolic process"/>
    <property type="evidence" value="ECO:0000250"/>
    <property type="project" value="UniProtKB"/>
</dbReference>
<dbReference type="GO" id="GO:0015938">
    <property type="term" value="P:coenzyme A catabolic process"/>
    <property type="evidence" value="ECO:0000250"/>
    <property type="project" value="UniProtKB"/>
</dbReference>
<dbReference type="GO" id="GO:2001294">
    <property type="term" value="P:malonyl-CoA catabolic process"/>
    <property type="evidence" value="ECO:0000250"/>
    <property type="project" value="UniProtKB"/>
</dbReference>
<dbReference type="GO" id="GO:0036114">
    <property type="term" value="P:medium-chain fatty-acyl-CoA catabolic process"/>
    <property type="evidence" value="ECO:0000250"/>
    <property type="project" value="UniProtKB"/>
</dbReference>
<dbReference type="GO" id="GO:1902859">
    <property type="term" value="P:propionyl-CoA catabolic process"/>
    <property type="evidence" value="ECO:0000250"/>
    <property type="project" value="UniProtKB"/>
</dbReference>
<dbReference type="GO" id="GO:1901289">
    <property type="term" value="P:succinyl-CoA catabolic process"/>
    <property type="evidence" value="ECO:0000250"/>
    <property type="project" value="UniProtKB"/>
</dbReference>
<dbReference type="CDD" id="cd03426">
    <property type="entry name" value="NUDIX_CoAse_Nudt7"/>
    <property type="match status" value="1"/>
</dbReference>
<dbReference type="Gene3D" id="3.90.79.10">
    <property type="entry name" value="Nucleoside Triphosphate Pyrophosphohydrolase"/>
    <property type="match status" value="1"/>
</dbReference>
<dbReference type="InterPro" id="IPR045121">
    <property type="entry name" value="CoAse"/>
</dbReference>
<dbReference type="InterPro" id="IPR015797">
    <property type="entry name" value="NUDIX_hydrolase-like_dom_sf"/>
</dbReference>
<dbReference type="InterPro" id="IPR000086">
    <property type="entry name" value="NUDIX_hydrolase_dom"/>
</dbReference>
<dbReference type="PANTHER" id="PTHR12992:SF11">
    <property type="entry name" value="MITOCHONDRIAL COENZYME A DIPHOSPHATASE NUDT8"/>
    <property type="match status" value="1"/>
</dbReference>
<dbReference type="PANTHER" id="PTHR12992">
    <property type="entry name" value="NUDIX HYDROLASE"/>
    <property type="match status" value="1"/>
</dbReference>
<dbReference type="Pfam" id="PF00293">
    <property type="entry name" value="NUDIX"/>
    <property type="match status" value="1"/>
</dbReference>
<dbReference type="SUPFAM" id="SSF55811">
    <property type="entry name" value="Nudix"/>
    <property type="match status" value="1"/>
</dbReference>
<dbReference type="PROSITE" id="PS51462">
    <property type="entry name" value="NUDIX"/>
    <property type="match status" value="1"/>
</dbReference>
<evidence type="ECO:0000250" key="1"/>
<evidence type="ECO:0000250" key="2">
    <source>
        <dbReference type="UniProtKB" id="Q9CR24"/>
    </source>
</evidence>
<evidence type="ECO:0000255" key="3">
    <source>
        <dbReference type="PROSITE-ProRule" id="PRU00794"/>
    </source>
</evidence>
<evidence type="ECO:0000303" key="4">
    <source>
    </source>
</evidence>
<evidence type="ECO:0000305" key="5"/>
<sequence>MLPDCLSAEGELRCRRLLAGATARLRARPASAAVLVPLCSVRGVPALLYTLRSSRLTGRHKGDVSFPGGKCDPADQDVVHTALRETREELGLAVPEEHVWGLLRPVYDPQKATVVPVLAGVGPLDPQSLRPNSEEVDEVFALPLAHLLQTQNQGYTHFCRGGHFRYTLPVFLHGPHRVWGLTAVITEFALQLLAPGTYQPRLAGLTCSGAEGLARPKQPLASPCQASSTPGLNKGL</sequence>
<accession>Q8WV74</accession>
<accession>Q6ZW59</accession>
<name>NUDT8_HUMAN</name>
<keyword id="KW-0025">Alternative splicing</keyword>
<keyword id="KW-0378">Hydrolase</keyword>
<keyword id="KW-0460">Magnesium</keyword>
<keyword id="KW-0464">Manganese</keyword>
<keyword id="KW-0479">Metal-binding</keyword>
<keyword id="KW-0496">Mitochondrion</keyword>
<keyword id="KW-1267">Proteomics identification</keyword>
<keyword id="KW-1185">Reference proteome</keyword>